<protein>
    <recommendedName>
        <fullName>Myoglobin</fullName>
    </recommendedName>
    <alternativeName>
        <fullName evidence="1">Nitrite reductase MB</fullName>
        <ecNumber evidence="1">1.7.-.-</ecNumber>
    </alternativeName>
    <alternativeName>
        <fullName evidence="1">Pseudoperoxidase MB</fullName>
        <ecNumber evidence="1">1.11.1.-</ecNumber>
    </alternativeName>
</protein>
<comment type="function">
    <text evidence="1">Monomeric heme protein which primary function is to store oxygen and facilitate its diffusion within muscle tissues. Reversibly binds oxygen through a pentacoordinated heme iron and enables its timely and efficient release as needed during periods of heightened demand. Depending on the oxidative conditions of tissues and cells, and in addition to its ability to bind oxygen, it also has a nitrite reductase activity whereby it regulates the production of bioactive nitric oxide. Under stress conditions, like hypoxia and anoxia, it also protects cells against reactive oxygen species thanks to its pseudoperoxidase activity.</text>
</comment>
<comment type="catalytic activity">
    <reaction evidence="1">
        <text>Fe(III)-heme b-[protein] + nitric oxide + H2O = Fe(II)-heme b-[protein] + nitrite + 2 H(+)</text>
        <dbReference type="Rhea" id="RHEA:77711"/>
        <dbReference type="Rhea" id="RHEA-COMP:18975"/>
        <dbReference type="Rhea" id="RHEA-COMP:18976"/>
        <dbReference type="ChEBI" id="CHEBI:15377"/>
        <dbReference type="ChEBI" id="CHEBI:15378"/>
        <dbReference type="ChEBI" id="CHEBI:16301"/>
        <dbReference type="ChEBI" id="CHEBI:16480"/>
        <dbReference type="ChEBI" id="CHEBI:55376"/>
        <dbReference type="ChEBI" id="CHEBI:60344"/>
    </reaction>
    <physiologicalReaction direction="right-to-left" evidence="1">
        <dbReference type="Rhea" id="RHEA:77713"/>
    </physiologicalReaction>
</comment>
<comment type="catalytic activity">
    <reaction evidence="1">
        <text>H2O2 + AH2 = A + 2 H2O</text>
        <dbReference type="Rhea" id="RHEA:30275"/>
        <dbReference type="ChEBI" id="CHEBI:13193"/>
        <dbReference type="ChEBI" id="CHEBI:15377"/>
        <dbReference type="ChEBI" id="CHEBI:16240"/>
        <dbReference type="ChEBI" id="CHEBI:17499"/>
    </reaction>
</comment>
<comment type="subunit">
    <text evidence="2">Monomeric.</text>
</comment>
<comment type="subcellular location">
    <subcellularLocation>
        <location evidence="1">Cytoplasm</location>
        <location evidence="1">Sarcoplasm</location>
    </subcellularLocation>
</comment>
<comment type="similarity">
    <text evidence="7">Belongs to the globin family.</text>
</comment>
<gene>
    <name type="primary">MB</name>
</gene>
<name>MYG_PHODA</name>
<dbReference type="EC" id="1.7.-.-" evidence="1"/>
<dbReference type="EC" id="1.11.1.-" evidence="1"/>
<dbReference type="PIR" id="B90415">
    <property type="entry name" value="MYPED"/>
</dbReference>
<dbReference type="SMR" id="P68277"/>
<dbReference type="GO" id="GO:0070062">
    <property type="term" value="C:extracellular exosome"/>
    <property type="evidence" value="ECO:0007669"/>
    <property type="project" value="TreeGrafter"/>
</dbReference>
<dbReference type="GO" id="GO:0016528">
    <property type="term" value="C:sarcoplasm"/>
    <property type="evidence" value="ECO:0000250"/>
    <property type="project" value="UniProtKB"/>
</dbReference>
<dbReference type="GO" id="GO:0020037">
    <property type="term" value="F:heme binding"/>
    <property type="evidence" value="ECO:0007669"/>
    <property type="project" value="InterPro"/>
</dbReference>
<dbReference type="GO" id="GO:0046872">
    <property type="term" value="F:metal ion binding"/>
    <property type="evidence" value="ECO:0007669"/>
    <property type="project" value="UniProtKB-KW"/>
</dbReference>
<dbReference type="GO" id="GO:0098809">
    <property type="term" value="F:nitrite reductase activity"/>
    <property type="evidence" value="ECO:0000250"/>
    <property type="project" value="UniProtKB"/>
</dbReference>
<dbReference type="GO" id="GO:0019825">
    <property type="term" value="F:oxygen binding"/>
    <property type="evidence" value="ECO:0007669"/>
    <property type="project" value="InterPro"/>
</dbReference>
<dbReference type="GO" id="GO:0005344">
    <property type="term" value="F:oxygen carrier activity"/>
    <property type="evidence" value="ECO:0000250"/>
    <property type="project" value="UniProtKB"/>
</dbReference>
<dbReference type="GO" id="GO:0004601">
    <property type="term" value="F:peroxidase activity"/>
    <property type="evidence" value="ECO:0000250"/>
    <property type="project" value="UniProtKB"/>
</dbReference>
<dbReference type="GO" id="GO:0019430">
    <property type="term" value="P:removal of superoxide radicals"/>
    <property type="evidence" value="ECO:0000250"/>
    <property type="project" value="UniProtKB"/>
</dbReference>
<dbReference type="CDD" id="cd08926">
    <property type="entry name" value="Mb"/>
    <property type="match status" value="1"/>
</dbReference>
<dbReference type="Gene3D" id="6.10.140.2100">
    <property type="match status" value="1"/>
</dbReference>
<dbReference type="Gene3D" id="6.10.140.2110">
    <property type="match status" value="1"/>
</dbReference>
<dbReference type="InterPro" id="IPR000971">
    <property type="entry name" value="Globin"/>
</dbReference>
<dbReference type="InterPro" id="IPR009050">
    <property type="entry name" value="Globin-like_sf"/>
</dbReference>
<dbReference type="InterPro" id="IPR002335">
    <property type="entry name" value="Myoglobin"/>
</dbReference>
<dbReference type="PANTHER" id="PTHR47132">
    <property type="entry name" value="MYOGLOBIN"/>
    <property type="match status" value="1"/>
</dbReference>
<dbReference type="PANTHER" id="PTHR47132:SF1">
    <property type="entry name" value="MYOGLOBIN"/>
    <property type="match status" value="1"/>
</dbReference>
<dbReference type="Pfam" id="PF00042">
    <property type="entry name" value="Globin"/>
    <property type="match status" value="1"/>
</dbReference>
<dbReference type="PRINTS" id="PR00613">
    <property type="entry name" value="MYOGLOBIN"/>
</dbReference>
<dbReference type="SUPFAM" id="SSF46458">
    <property type="entry name" value="Globin-like"/>
    <property type="match status" value="1"/>
</dbReference>
<dbReference type="PROSITE" id="PS01033">
    <property type="entry name" value="GLOBIN"/>
    <property type="match status" value="1"/>
</dbReference>
<proteinExistence type="evidence at protein level"/>
<sequence>MGLSEGEWQLVLNVWGKVEADLAGHGQDVLIRLFKGHPETLEKFDKFKHLKTEAEMKASEDLKKHGNTVLTALGGILKKKGHHDAELKPLAQSHATKHKIPIKYLEFISEAIIHVLHSRHPAEFGADAQGAMNKALELFRKDIATKYKELGFHG</sequence>
<feature type="initiator methionine" description="Removed" evidence="8">
    <location>
        <position position="1"/>
    </location>
</feature>
<feature type="chain" id="PRO_0000053331" description="Myoglobin">
    <location>
        <begin position="2"/>
        <end position="154"/>
    </location>
</feature>
<feature type="domain" description="Globin" evidence="7">
    <location>
        <begin position="2"/>
        <end position="148"/>
    </location>
</feature>
<feature type="binding site" evidence="5">
    <location>
        <position position="65"/>
    </location>
    <ligand>
        <name>nitrite</name>
        <dbReference type="ChEBI" id="CHEBI:16301"/>
    </ligand>
</feature>
<feature type="binding site" evidence="3 7">
    <location>
        <position position="65"/>
    </location>
    <ligand>
        <name>O2</name>
        <dbReference type="ChEBI" id="CHEBI:15379"/>
    </ligand>
</feature>
<feature type="binding site" description="proximal binding residue" evidence="1">
    <location>
        <position position="94"/>
    </location>
    <ligand>
        <name>heme b</name>
        <dbReference type="ChEBI" id="CHEBI:60344"/>
    </ligand>
    <ligandPart>
        <name>Fe</name>
        <dbReference type="ChEBI" id="CHEBI:18248"/>
    </ligandPart>
</feature>
<feature type="modified residue" description="Phosphoserine" evidence="6">
    <location>
        <position position="4"/>
    </location>
</feature>
<feature type="modified residue" description="Phosphothreonine" evidence="4">
    <location>
        <position position="68"/>
    </location>
</feature>
<organism>
    <name type="scientific">Phocoenoides dalli dalli</name>
    <name type="common">Dall's porpoise</name>
    <dbReference type="NCBI Taxonomy" id="9745"/>
    <lineage>
        <taxon>Eukaryota</taxon>
        <taxon>Metazoa</taxon>
        <taxon>Chordata</taxon>
        <taxon>Craniata</taxon>
        <taxon>Vertebrata</taxon>
        <taxon>Euteleostomi</taxon>
        <taxon>Mammalia</taxon>
        <taxon>Eutheria</taxon>
        <taxon>Laurasiatheria</taxon>
        <taxon>Artiodactyla</taxon>
        <taxon>Whippomorpha</taxon>
        <taxon>Cetacea</taxon>
        <taxon>Odontoceti</taxon>
        <taxon>Phocoenidae</taxon>
        <taxon>Phocoenoides</taxon>
    </lineage>
</organism>
<reference key="1">
    <citation type="journal article" date="1978" name="Biochemistry">
        <title>Complete amino acid sequence of the myoglobin from the Dall porpoise (Phocoenoides dalli dalli) and reinvestigation of the primary structure of the myoglobin from common porpoise (Phocoena phocoena).</title>
        <authorList>
            <person name="Meuth J.L."/>
            <person name="Jones B.N."/>
            <person name="Garner W.H."/>
            <person name="Gurd F.R.N."/>
        </authorList>
    </citation>
    <scope>PROTEIN SEQUENCE OF 2-154</scope>
</reference>
<accession>P68277</accession>
<accession>P02176</accession>
<keyword id="KW-0963">Cytoplasm</keyword>
<keyword id="KW-0903">Direct protein sequencing</keyword>
<keyword id="KW-0349">Heme</keyword>
<keyword id="KW-0408">Iron</keyword>
<keyword id="KW-0479">Metal-binding</keyword>
<keyword id="KW-0514">Muscle protein</keyword>
<keyword id="KW-0560">Oxidoreductase</keyword>
<keyword id="KW-0561">Oxygen transport</keyword>
<keyword id="KW-0597">Phosphoprotein</keyword>
<keyword id="KW-0813">Transport</keyword>
<evidence type="ECO:0000250" key="1">
    <source>
        <dbReference type="UniProtKB" id="P02144"/>
    </source>
</evidence>
<evidence type="ECO:0000250" key="2">
    <source>
        <dbReference type="UniProtKB" id="P02185"/>
    </source>
</evidence>
<evidence type="ECO:0000250" key="3">
    <source>
        <dbReference type="UniProtKB" id="P02189"/>
    </source>
</evidence>
<evidence type="ECO:0000250" key="4">
    <source>
        <dbReference type="UniProtKB" id="P04247"/>
    </source>
</evidence>
<evidence type="ECO:0000250" key="5">
    <source>
        <dbReference type="UniProtKB" id="P68082"/>
    </source>
</evidence>
<evidence type="ECO:0000250" key="6">
    <source>
        <dbReference type="UniProtKB" id="Q9QZ76"/>
    </source>
</evidence>
<evidence type="ECO:0000255" key="7">
    <source>
        <dbReference type="PROSITE-ProRule" id="PRU00238"/>
    </source>
</evidence>
<evidence type="ECO:0000269" key="8">
    <source>
    </source>
</evidence>